<dbReference type="EC" id="3.6.4.-" evidence="1"/>
<dbReference type="EMBL" id="CP000056">
    <property type="protein sequence ID" value="AAX71149.1"/>
    <property type="status" value="ALT_INIT"/>
    <property type="molecule type" value="Genomic_DNA"/>
</dbReference>
<dbReference type="RefSeq" id="WP_011054100.1">
    <property type="nucleotide sequence ID" value="NC_007296.2"/>
</dbReference>
<dbReference type="SMR" id="Q48VY1"/>
<dbReference type="KEGG" id="spb:M28_Spy0035"/>
<dbReference type="HOGENOM" id="CLU_055599_1_0_9"/>
<dbReference type="GO" id="GO:0005737">
    <property type="term" value="C:cytoplasm"/>
    <property type="evidence" value="ECO:0007669"/>
    <property type="project" value="UniProtKB-SubCell"/>
</dbReference>
<dbReference type="GO" id="GO:0048476">
    <property type="term" value="C:Holliday junction resolvase complex"/>
    <property type="evidence" value="ECO:0007669"/>
    <property type="project" value="UniProtKB-UniRule"/>
</dbReference>
<dbReference type="GO" id="GO:0005524">
    <property type="term" value="F:ATP binding"/>
    <property type="evidence" value="ECO:0007669"/>
    <property type="project" value="UniProtKB-UniRule"/>
</dbReference>
<dbReference type="GO" id="GO:0016887">
    <property type="term" value="F:ATP hydrolysis activity"/>
    <property type="evidence" value="ECO:0007669"/>
    <property type="project" value="InterPro"/>
</dbReference>
<dbReference type="GO" id="GO:0000400">
    <property type="term" value="F:four-way junction DNA binding"/>
    <property type="evidence" value="ECO:0007669"/>
    <property type="project" value="UniProtKB-UniRule"/>
</dbReference>
<dbReference type="GO" id="GO:0009378">
    <property type="term" value="F:four-way junction helicase activity"/>
    <property type="evidence" value="ECO:0007669"/>
    <property type="project" value="InterPro"/>
</dbReference>
<dbReference type="GO" id="GO:0006310">
    <property type="term" value="P:DNA recombination"/>
    <property type="evidence" value="ECO:0007669"/>
    <property type="project" value="UniProtKB-UniRule"/>
</dbReference>
<dbReference type="GO" id="GO:0006281">
    <property type="term" value="P:DNA repair"/>
    <property type="evidence" value="ECO:0007669"/>
    <property type="project" value="UniProtKB-UniRule"/>
</dbReference>
<dbReference type="CDD" id="cd00009">
    <property type="entry name" value="AAA"/>
    <property type="match status" value="1"/>
</dbReference>
<dbReference type="Gene3D" id="1.10.8.60">
    <property type="match status" value="1"/>
</dbReference>
<dbReference type="Gene3D" id="3.40.50.300">
    <property type="entry name" value="P-loop containing nucleotide triphosphate hydrolases"/>
    <property type="match status" value="1"/>
</dbReference>
<dbReference type="Gene3D" id="1.10.10.10">
    <property type="entry name" value="Winged helix-like DNA-binding domain superfamily/Winged helix DNA-binding domain"/>
    <property type="match status" value="1"/>
</dbReference>
<dbReference type="HAMAP" id="MF_00016">
    <property type="entry name" value="DNA_HJ_migration_RuvB"/>
    <property type="match status" value="1"/>
</dbReference>
<dbReference type="InterPro" id="IPR003593">
    <property type="entry name" value="AAA+_ATPase"/>
</dbReference>
<dbReference type="InterPro" id="IPR041445">
    <property type="entry name" value="AAA_lid_4"/>
</dbReference>
<dbReference type="InterPro" id="IPR004605">
    <property type="entry name" value="DNA_helicase_Holl-junc_RuvB"/>
</dbReference>
<dbReference type="InterPro" id="IPR027417">
    <property type="entry name" value="P-loop_NTPase"/>
</dbReference>
<dbReference type="InterPro" id="IPR008824">
    <property type="entry name" value="RuvB-like_N"/>
</dbReference>
<dbReference type="InterPro" id="IPR008823">
    <property type="entry name" value="RuvB_C"/>
</dbReference>
<dbReference type="InterPro" id="IPR036388">
    <property type="entry name" value="WH-like_DNA-bd_sf"/>
</dbReference>
<dbReference type="InterPro" id="IPR036390">
    <property type="entry name" value="WH_DNA-bd_sf"/>
</dbReference>
<dbReference type="NCBIfam" id="NF000868">
    <property type="entry name" value="PRK00080.1"/>
    <property type="match status" value="1"/>
</dbReference>
<dbReference type="NCBIfam" id="TIGR00635">
    <property type="entry name" value="ruvB"/>
    <property type="match status" value="1"/>
</dbReference>
<dbReference type="PANTHER" id="PTHR42848">
    <property type="match status" value="1"/>
</dbReference>
<dbReference type="PANTHER" id="PTHR42848:SF1">
    <property type="entry name" value="HOLLIDAY JUNCTION BRANCH MIGRATION COMPLEX SUBUNIT RUVB"/>
    <property type="match status" value="1"/>
</dbReference>
<dbReference type="Pfam" id="PF17864">
    <property type="entry name" value="AAA_lid_4"/>
    <property type="match status" value="1"/>
</dbReference>
<dbReference type="Pfam" id="PF05491">
    <property type="entry name" value="RuvB_C"/>
    <property type="match status" value="1"/>
</dbReference>
<dbReference type="Pfam" id="PF05496">
    <property type="entry name" value="RuvB_N"/>
    <property type="match status" value="1"/>
</dbReference>
<dbReference type="SMART" id="SM00382">
    <property type="entry name" value="AAA"/>
    <property type="match status" value="1"/>
</dbReference>
<dbReference type="SUPFAM" id="SSF52540">
    <property type="entry name" value="P-loop containing nucleoside triphosphate hydrolases"/>
    <property type="match status" value="1"/>
</dbReference>
<dbReference type="SUPFAM" id="SSF46785">
    <property type="entry name" value="Winged helix' DNA-binding domain"/>
    <property type="match status" value="1"/>
</dbReference>
<reference key="1">
    <citation type="journal article" date="2005" name="J. Infect. Dis.">
        <title>Genome sequence of a serotype M28 strain of group A Streptococcus: potential new insights into puerperal sepsis and bacterial disease specificity.</title>
        <authorList>
            <person name="Green N.M."/>
            <person name="Zhang S."/>
            <person name="Porcella S.F."/>
            <person name="Nagiec M.J."/>
            <person name="Barbian K.D."/>
            <person name="Beres S.B."/>
            <person name="Lefebvre R.B."/>
            <person name="Musser J.M."/>
        </authorList>
    </citation>
    <scope>NUCLEOTIDE SEQUENCE [LARGE SCALE GENOMIC DNA]</scope>
    <source>
        <strain>MGAS6180</strain>
    </source>
</reference>
<organism>
    <name type="scientific">Streptococcus pyogenes serotype M28 (strain MGAS6180)</name>
    <dbReference type="NCBI Taxonomy" id="319701"/>
    <lineage>
        <taxon>Bacteria</taxon>
        <taxon>Bacillati</taxon>
        <taxon>Bacillota</taxon>
        <taxon>Bacilli</taxon>
        <taxon>Lactobacillales</taxon>
        <taxon>Streptococcaceae</taxon>
        <taxon>Streptococcus</taxon>
    </lineage>
</organism>
<proteinExistence type="inferred from homology"/>
<feature type="chain" id="PRO_0000235413" description="Holliday junction branch migration complex subunit RuvB">
    <location>
        <begin position="1"/>
        <end position="332"/>
    </location>
</feature>
<feature type="region of interest" description="Large ATPase domain (RuvB-L)" evidence="1">
    <location>
        <begin position="1"/>
        <end position="181"/>
    </location>
</feature>
<feature type="region of interest" description="Small ATPAse domain (RuvB-S)" evidence="1">
    <location>
        <begin position="182"/>
        <end position="252"/>
    </location>
</feature>
<feature type="region of interest" description="Head domain (RuvB-H)" evidence="1">
    <location>
        <begin position="255"/>
        <end position="332"/>
    </location>
</feature>
<feature type="binding site" evidence="1">
    <location>
        <position position="20"/>
    </location>
    <ligand>
        <name>ATP</name>
        <dbReference type="ChEBI" id="CHEBI:30616"/>
    </ligand>
</feature>
<feature type="binding site" evidence="1">
    <location>
        <position position="21"/>
    </location>
    <ligand>
        <name>ATP</name>
        <dbReference type="ChEBI" id="CHEBI:30616"/>
    </ligand>
</feature>
<feature type="binding site" evidence="1">
    <location>
        <position position="62"/>
    </location>
    <ligand>
        <name>ATP</name>
        <dbReference type="ChEBI" id="CHEBI:30616"/>
    </ligand>
</feature>
<feature type="binding site" evidence="1">
    <location>
        <position position="65"/>
    </location>
    <ligand>
        <name>ATP</name>
        <dbReference type="ChEBI" id="CHEBI:30616"/>
    </ligand>
</feature>
<feature type="binding site" evidence="1">
    <location>
        <position position="66"/>
    </location>
    <ligand>
        <name>ATP</name>
        <dbReference type="ChEBI" id="CHEBI:30616"/>
    </ligand>
</feature>
<feature type="binding site" evidence="1">
    <location>
        <position position="66"/>
    </location>
    <ligand>
        <name>Mg(2+)</name>
        <dbReference type="ChEBI" id="CHEBI:18420"/>
    </ligand>
</feature>
<feature type="binding site" evidence="1">
    <location>
        <position position="67"/>
    </location>
    <ligand>
        <name>ATP</name>
        <dbReference type="ChEBI" id="CHEBI:30616"/>
    </ligand>
</feature>
<feature type="binding site" evidence="1">
    <location>
        <begin position="128"/>
        <end position="130"/>
    </location>
    <ligand>
        <name>ATP</name>
        <dbReference type="ChEBI" id="CHEBI:30616"/>
    </ligand>
</feature>
<feature type="binding site" evidence="1">
    <location>
        <position position="171"/>
    </location>
    <ligand>
        <name>ATP</name>
        <dbReference type="ChEBI" id="CHEBI:30616"/>
    </ligand>
</feature>
<feature type="binding site" evidence="1">
    <location>
        <position position="181"/>
    </location>
    <ligand>
        <name>ATP</name>
        <dbReference type="ChEBI" id="CHEBI:30616"/>
    </ligand>
</feature>
<feature type="binding site" evidence="1">
    <location>
        <position position="218"/>
    </location>
    <ligand>
        <name>ATP</name>
        <dbReference type="ChEBI" id="CHEBI:30616"/>
    </ligand>
</feature>
<feature type="binding site" evidence="1">
    <location>
        <position position="291"/>
    </location>
    <ligand>
        <name>DNA</name>
        <dbReference type="ChEBI" id="CHEBI:16991"/>
    </ligand>
</feature>
<feature type="binding site" evidence="1">
    <location>
        <position position="310"/>
    </location>
    <ligand>
        <name>DNA</name>
        <dbReference type="ChEBI" id="CHEBI:16991"/>
    </ligand>
</feature>
<feature type="binding site" evidence="1">
    <location>
        <position position="312"/>
    </location>
    <ligand>
        <name>DNA</name>
        <dbReference type="ChEBI" id="CHEBI:16991"/>
    </ligand>
</feature>
<feature type="binding site" evidence="1">
    <location>
        <position position="315"/>
    </location>
    <ligand>
        <name>DNA</name>
        <dbReference type="ChEBI" id="CHEBI:16991"/>
    </ligand>
</feature>
<accession>Q48VY1</accession>
<gene>
    <name evidence="1" type="primary">ruvB</name>
    <name type="ordered locus">M28_Spy0035</name>
</gene>
<keyword id="KW-0067">ATP-binding</keyword>
<keyword id="KW-0963">Cytoplasm</keyword>
<keyword id="KW-0227">DNA damage</keyword>
<keyword id="KW-0233">DNA recombination</keyword>
<keyword id="KW-0234">DNA repair</keyword>
<keyword id="KW-0238">DNA-binding</keyword>
<keyword id="KW-0378">Hydrolase</keyword>
<keyword id="KW-0547">Nucleotide-binding</keyword>
<comment type="function">
    <text evidence="1">The RuvA-RuvB-RuvC complex processes Holliday junction (HJ) DNA during genetic recombination and DNA repair, while the RuvA-RuvB complex plays an important role in the rescue of blocked DNA replication forks via replication fork reversal (RFR). RuvA specifically binds to HJ cruciform DNA, conferring on it an open structure. The RuvB hexamer acts as an ATP-dependent pump, pulling dsDNA into and through the RuvAB complex. RuvB forms 2 homohexamers on either side of HJ DNA bound by 1 or 2 RuvA tetramers; 4 subunits per hexamer contact DNA at a time. Coordinated motions by a converter formed by DNA-disengaged RuvB subunits stimulates ATP hydrolysis and nucleotide exchange. Immobilization of the converter enables RuvB to convert the ATP-contained energy into a lever motion, pulling 2 nucleotides of DNA out of the RuvA tetramer per ATP hydrolyzed, thus driving DNA branch migration. The RuvB motors rotate together with the DNA substrate, which together with the progressing nucleotide cycle form the mechanistic basis for DNA recombination by continuous HJ branch migration. Branch migration allows RuvC to scan DNA until it finds its consensus sequence, where it cleaves and resolves cruciform DNA.</text>
</comment>
<comment type="catalytic activity">
    <reaction evidence="1">
        <text>ATP + H2O = ADP + phosphate + H(+)</text>
        <dbReference type="Rhea" id="RHEA:13065"/>
        <dbReference type="ChEBI" id="CHEBI:15377"/>
        <dbReference type="ChEBI" id="CHEBI:15378"/>
        <dbReference type="ChEBI" id="CHEBI:30616"/>
        <dbReference type="ChEBI" id="CHEBI:43474"/>
        <dbReference type="ChEBI" id="CHEBI:456216"/>
    </reaction>
</comment>
<comment type="subunit">
    <text evidence="1">Homohexamer. Forms an RuvA(8)-RuvB(12)-Holliday junction (HJ) complex. HJ DNA is sandwiched between 2 RuvA tetramers; dsDNA enters through RuvA and exits via RuvB. An RuvB hexamer assembles on each DNA strand where it exits the tetramer. Each RuvB hexamer is contacted by two RuvA subunits (via domain III) on 2 adjacent RuvB subunits; this complex drives branch migration. In the full resolvosome a probable DNA-RuvA(4)-RuvB(12)-RuvC(2) complex forms which resolves the HJ.</text>
</comment>
<comment type="subcellular location">
    <subcellularLocation>
        <location evidence="1">Cytoplasm</location>
    </subcellularLocation>
</comment>
<comment type="domain">
    <text evidence="1">Has 3 domains, the large (RuvB-L) and small ATPase (RuvB-S) domains and the C-terminal head (RuvB-H) domain. The head domain binds DNA, while the ATPase domains jointly bind ATP, ADP or are empty depending on the state of the subunit in the translocation cycle. During a single DNA translocation step the structure of each domain remains the same, but their relative positions change.</text>
</comment>
<comment type="similarity">
    <text evidence="1">Belongs to the RuvB family.</text>
</comment>
<comment type="sequence caution" evidence="2">
    <conflict type="erroneous initiation">
        <sequence resource="EMBL-CDS" id="AAX71149"/>
    </conflict>
</comment>
<protein>
    <recommendedName>
        <fullName evidence="1">Holliday junction branch migration complex subunit RuvB</fullName>
        <ecNumber evidence="1">3.6.4.-</ecNumber>
    </recommendedName>
</protein>
<evidence type="ECO:0000255" key="1">
    <source>
        <dbReference type="HAMAP-Rule" id="MF_00016"/>
    </source>
</evidence>
<evidence type="ECO:0000305" key="2"/>
<sequence>MARILDNDVMGNEEFSDRTLRPQYLHEYIGQDKVKEQFAIFIEAAKRRDESLDHVLLFGPPGLGKTTMAFVIANELGVNLKQTSGPAVEKAGDLVAILNELEPGDILFIDEIHRMPMSVEEVLYSAMEDFYIDIMIGAGDTSRSIHLDLPPFTLIGATTRAGMLSNPLRARFGITGHMEYYQEKDLTEIVERTATIFEIKIDHEAARKLACRSRGTPRIANRLLKRVRDYAQIIGDGIITAQITDRALTMLDVDREGLDYIDQKILRTMIEMYQGGPVGLGTLSVNIAEERNTVEEMYEPYLIQKGFLMRTRTGRVATQKAYRHLGYPYQNT</sequence>
<name>RUVB_STRPM</name>